<reference key="1">
    <citation type="journal article" date="1980" name="Gene">
        <title>The nucleotide sequence of the cloned tufA gene of Escherichia coli.</title>
        <authorList>
            <person name="Yokota T."/>
            <person name="Sugisaki H."/>
            <person name="Takanami M."/>
            <person name="Kaziro Y."/>
        </authorList>
    </citation>
    <scope>NUCLEOTIDE SEQUENCE [GENOMIC DNA]</scope>
</reference>
<reference key="2">
    <citation type="journal article" date="1997" name="Science">
        <title>The complete genome sequence of Escherichia coli K-12.</title>
        <authorList>
            <person name="Blattner F.R."/>
            <person name="Plunkett G. III"/>
            <person name="Bloch C.A."/>
            <person name="Perna N.T."/>
            <person name="Burland V."/>
            <person name="Riley M."/>
            <person name="Collado-Vides J."/>
            <person name="Glasner J.D."/>
            <person name="Rode C.K."/>
            <person name="Mayhew G.F."/>
            <person name="Gregor J."/>
            <person name="Davis N.W."/>
            <person name="Kirkpatrick H.A."/>
            <person name="Goeden M.A."/>
            <person name="Rose D.J."/>
            <person name="Mau B."/>
            <person name="Shao Y."/>
        </authorList>
    </citation>
    <scope>NUCLEOTIDE SEQUENCE [LARGE SCALE GENOMIC DNA]</scope>
    <source>
        <strain>K12 / MG1655 / ATCC 47076</strain>
    </source>
</reference>
<reference key="3">
    <citation type="journal article" date="2006" name="Mol. Syst. Biol.">
        <title>Highly accurate genome sequences of Escherichia coli K-12 strains MG1655 and W3110.</title>
        <authorList>
            <person name="Hayashi K."/>
            <person name="Morooka N."/>
            <person name="Yamamoto Y."/>
            <person name="Fujita K."/>
            <person name="Isono K."/>
            <person name="Choi S."/>
            <person name="Ohtsubo E."/>
            <person name="Baba T."/>
            <person name="Wanner B.L."/>
            <person name="Mori H."/>
            <person name="Horiuchi T."/>
        </authorList>
    </citation>
    <scope>NUCLEOTIDE SEQUENCE [LARGE SCALE GENOMIC DNA]</scope>
    <source>
        <strain>K12 / W3110 / ATCC 27325 / DSM 5911</strain>
    </source>
</reference>
<reference key="4">
    <citation type="journal article" date="1980" name="Eur. J. Biochem.">
        <title>The complete amino-acid sequence of elongation factor Tu from Escherichia coli.</title>
        <authorList>
            <person name="Jones M.D."/>
            <person name="Petersen T.E."/>
            <person name="Nielsen K.M."/>
            <person name="Magnusson S."/>
            <person name="Sottrup-Jensen L."/>
            <person name="Gausing K."/>
            <person name="Clark B.F.C."/>
        </authorList>
    </citation>
    <scope>PROTEIN SEQUENCE OF 2-394</scope>
    <scope>ACETYLATION AT SER-2</scope>
    <scope>METHYLATION AT LYS-57</scope>
    <source>
        <strain>B</strain>
    </source>
</reference>
<reference key="5">
    <citation type="journal article" date="1981" name="J. Biol. Chem.">
        <title>The amino acid sequence of elongation factor Tu of Escherichia coli. The complete sequence.</title>
        <authorList>
            <person name="Laursen R.A."/>
            <person name="L'Italien J.J."/>
            <person name="Nagarkatti S."/>
            <person name="Miller D.L."/>
        </authorList>
    </citation>
    <scope>PROTEIN SEQUENCE OF 2-394</scope>
    <scope>ACETYLATION AT SER-2</scope>
    <scope>METHYLATION AT LYS-57</scope>
</reference>
<reference key="6">
    <citation type="journal article" date="1979" name="FEBS Lett.">
        <title>Location of the site of methylation in elongation factor Tu.</title>
        <authorList>
            <person name="L'Italien J.J."/>
            <person name="Laursen R.A."/>
        </authorList>
    </citation>
    <scope>PROTEIN SEQUENCE OF 46-59</scope>
    <scope>METHYLATION AT LYS-57</scope>
    <source>
        <strain>B</strain>
    </source>
</reference>
<reference key="7">
    <citation type="journal article" date="1990" name="J. Biol. Chem.">
        <title>Substitution of proline 82 by threonine induces autophosphorylating activity in GTP-binding domain of elongation factor Tu.</title>
        <authorList>
            <person name="Cool R.H."/>
            <person name="Jensen M."/>
            <person name="Jonak J."/>
            <person name="Clark B.F.C."/>
            <person name="Parmeggiani A."/>
        </authorList>
    </citation>
    <scope>PROTEIN SEQUENCE OF 76-90</scope>
    <scope>MUTAGENESIS OF PRO-83</scope>
    <scope>CATALYTIC ACTIVITY</scope>
    <scope>FUNCTION</scope>
</reference>
<reference key="8">
    <citation type="journal article" date="1991" name="J. Bacteriol.">
        <title>Elongation factor Tu is methylated in response to nutrient deprivation in Escherichia coli.</title>
        <authorList>
            <person name="Young C.C."/>
            <person name="Bernlohr R.W."/>
        </authorList>
    </citation>
    <scope>PROTEIN SEQUENCE OF 153-176 AND 262-290</scope>
    <scope>METHYLATION AT LYS-57 IN RESPONSE TO NUTRIENT STARVATION</scope>
    <scope>SUBCELLULAR LOCATION</scope>
    <source>
        <strain>B/R</strain>
    </source>
</reference>
<reference key="9">
    <citation type="journal article" date="1997" name="Electrophoresis">
        <title>Comparing the predicted and observed properties of proteins encoded in the genome of Escherichia coli K-12.</title>
        <authorList>
            <person name="Link A.J."/>
            <person name="Robison K."/>
            <person name="Church G.M."/>
        </authorList>
    </citation>
    <scope>PROTEIN SEQUENCE OF 311-322</scope>
    <scope>BLOCKAGE OF N-TERMINUS</scope>
    <source>
        <strain>K12 / EMG2</strain>
    </source>
</reference>
<reference key="10">
    <citation type="submission" date="1998-04" db="EMBL/GenBank/DDBJ databases">
        <authorList>
            <person name="Noorani S.M."/>
            <person name="Lindahl L."/>
            <person name="Zengel J.M."/>
        </authorList>
    </citation>
    <scope>NUCLEOTIDE SEQUENCE [GENOMIC DNA] OF 369-394</scope>
    <source>
        <strain>ECOR 30</strain>
    </source>
</reference>
<reference key="11">
    <citation type="journal article" date="1976" name="Nature">
        <title>Abundance and membrane association of elongation factor Tu in E. coli.</title>
        <authorList>
            <person name="Jacobson G.R."/>
            <person name="Rosenbusch J.P."/>
        </authorList>
    </citation>
    <scope>BLOCKAGE OF N-TERMINUS</scope>
    <scope>SUBCELLULAR LOCATION</scope>
    <source>
        <strain>K12 / BHB 960</strain>
    </source>
</reference>
<reference key="12">
    <citation type="journal article" date="1976" name="J. Biol. Chem.">
        <title>Immunochemical analysis of the functions of the subunits of phage Qbeta ribonucleic acid replicase.</title>
        <authorList>
            <person name="Carmichael G.G."/>
            <person name="Landers T.A."/>
            <person name="Weber K."/>
        </authorList>
    </citation>
    <scope>FUNCTION IN VIRAL RNA REPLICATION (MICROBIAL INFECTION)</scope>
    <scope>SUBUNIT (MICROBIAL INFECTION)</scope>
</reference>
<reference key="13">
    <citation type="journal article" date="1993" name="J. Biol. Chem.">
        <title>Prokaryotic elongation factor Tu is phosphorylated in vivo.</title>
        <authorList>
            <person name="Lippmann C."/>
            <person name="Lindschau C."/>
            <person name="Vijgenboom E."/>
            <person name="Schroeder W."/>
            <person name="Bosch L."/>
            <person name="Erdmann V.A."/>
        </authorList>
    </citation>
    <scope>PHOSPHORYLATION AT THR-383</scope>
    <scope>PROTEIN SEQUENCE OF 290-304 AND 383-391</scope>
</reference>
<reference key="14">
    <citation type="journal article" date="1987" name="J. Biol. Chem.">
        <title>A mutation that alters the nucleotide specificity of elongation factor Tu, a GTP regulatory protein.</title>
        <authorList>
            <person name="Hwang Y.-W."/>
            <person name="Miller D.L."/>
        </authorList>
    </citation>
    <scope>MUTAGENESIS OF ASP-139</scope>
</reference>
<reference key="15">
    <citation type="journal article" date="1989" name="Eur. J. Biochem.">
        <title>Substitution of Val20 by Gly in elongation factor Tu. Effects on the interaction with elongation factors Ts, aminoacyl-tRNA and ribosomes.</title>
        <authorList>
            <person name="Jacquet E."/>
            <person name="Parmeggiani A."/>
        </authorList>
    </citation>
    <scope>MUTAGENESIS OF VAL-21</scope>
    <scope>CATALYTIC ACTIVITY</scope>
    <scope>FUNCTION</scope>
</reference>
<reference key="16">
    <citation type="journal article" date="1989" name="J. Biol. Chem.">
        <title>Mutagenesis of bacterial elongation factor Tu at lysine 136. A conserved amino acid in GTP regulatory proteins.</title>
        <authorList>
            <person name="Hwang Y.-W."/>
            <person name="Sanchez A."/>
            <person name="Miller D.L."/>
        </authorList>
    </citation>
    <scope>MUTAGENESIS OF LYS-137</scope>
</reference>
<reference key="17">
    <citation type="journal article" date="1989" name="Arch. Biochem. Biophys.">
        <title>Site-directed mutagenesis of the GDP binding domain of bacterial elongation factor Tu.</title>
        <authorList>
            <person name="Hwang Y.-W."/>
            <person name="McCabe P.G."/>
            <person name="Innis M.A."/>
            <person name="Miller D.L."/>
        </authorList>
    </citation>
    <scope>MUTAGENESIS</scope>
</reference>
<reference key="18">
    <citation type="journal article" date="1996" name="EMBO J.">
        <title>The G222D mutation in elongation factor Tu inhibits the codon-induced conformational changes leading to GTPase activation on the ribosome.</title>
        <authorList>
            <person name="Vorstenbosch E."/>
            <person name="Pape T."/>
            <person name="Rodnina M.V."/>
            <person name="Kraal B."/>
            <person name="Wintermeyer W."/>
        </authorList>
    </citation>
    <scope>CHARACTERIZATION OF MUTANT ASP-223</scope>
</reference>
<reference key="19">
    <citation type="journal article" date="1997" name="Electrophoresis">
        <title>Escherichia coli proteome analysis using the gene-protein database.</title>
        <authorList>
            <person name="VanBogelen R.A."/>
            <person name="Abshire K.Z."/>
            <person name="Moldover B."/>
            <person name="Olson E.R."/>
            <person name="Neidhardt F.C."/>
        </authorList>
    </citation>
    <scope>IDENTIFICATION BY 2D-GEL</scope>
</reference>
<reference key="20">
    <citation type="journal article" date="1998" name="J. Biol. Chem.">
        <title>Mutational analysis of the roles of residues in Escherichia coli elongation factor Ts in the interaction with elongation factor Tu.</title>
        <authorList>
            <person name="Zhang Y."/>
            <person name="Yu N.-J."/>
            <person name="Spremulli L.L."/>
        </authorList>
    </citation>
    <scope>MUTAGENESIS OF HIS-20; GLN-115 AND GLU-349</scope>
</reference>
<reference key="21">
    <citation type="journal article" date="2009" name="Mol. Cell. Proteomics">
        <title>Lysine acetylation is a highly abundant and evolutionarily conserved modification in Escherichia coli.</title>
        <authorList>
            <person name="Zhang J."/>
            <person name="Sprung R."/>
            <person name="Pei J."/>
            <person name="Tan X."/>
            <person name="Kim S."/>
            <person name="Zhu H."/>
            <person name="Liu C.F."/>
            <person name="Grishin N.V."/>
            <person name="Zhao Y."/>
        </authorList>
    </citation>
    <scope>ACETYLATION [LARGE SCALE ANALYSIS] AT LYS-314</scope>
    <scope>IDENTIFICATION BY MASS SPECTROMETRY</scope>
    <source>
        <strain>K12 / JW1106</strain>
        <strain>K12 / MG1655 / ATCC 47076</strain>
    </source>
</reference>
<reference key="22">
    <citation type="journal article" date="1994" name="EMBO J.">
        <title>The structural and functional basis for the kirromycin resistance of mutant EF-Tu species in Escherichia coli.</title>
        <authorList>
            <person name="Mesters J.R."/>
            <person name="Zeef L.A.H."/>
            <person name="Hilgenfeld R."/>
            <person name="de Graaf J.M."/>
            <person name="Kraal B."/>
            <person name="Bosch L."/>
        </authorList>
    </citation>
    <scope>VARIANTS RESISTANT TO KIRROMYCIN</scope>
</reference>
<reference key="23">
    <citation type="journal article" date="1994" name="EMBO J.">
        <title>Pulvomycin-resistant mutants of E.coli elongation factor Tu.</title>
        <authorList>
            <person name="Zeef L.A.H."/>
            <person name="Bosch L."/>
            <person name="Anborgh P.H."/>
            <person name="Cetin R."/>
            <person name="Parmeggiani A."/>
            <person name="Hilgenfeld R."/>
        </authorList>
    </citation>
    <scope>VARIANTS RESISTANT TO PULVOMYCIN</scope>
</reference>
<reference key="24">
    <citation type="journal article" date="2004" name="J. Biol. Chem.">
        <title>Pre-binding of small protein B to a stalled ribosome triggers trans-translation.</title>
        <authorList>
            <person name="Hallier M."/>
            <person name="Ivanova N."/>
            <person name="Rametti A."/>
            <person name="Pavlov M."/>
            <person name="Ehrenberg M."/>
            <person name="Felden B."/>
        </authorList>
    </citation>
    <scope>FUNCTION IN TRANS-TRANSLATION</scope>
    <scope>TMRNA-BINDING</scope>
    <source>
        <strain>K12 / BW25113</strain>
    </source>
</reference>
<reference key="25">
    <citation type="journal article" date="2009" name="Science">
        <title>Molecular mechanisms of HipA-mediated multidrug tolerance and its neutralization by HipB.</title>
        <authorList>
            <person name="Schumacher M.A."/>
            <person name="Piro K.M."/>
            <person name="Xu W."/>
            <person name="Hansen S."/>
            <person name="Lewis K."/>
            <person name="Brennan R.G."/>
        </authorList>
    </citation>
    <scope>PHOSPHORYLATION AT THR-383 BY HIPA</scope>
</reference>
<reference key="26">
    <citation type="journal article" date="2013" name="Mol. Cell">
        <title>Molecular mechanism of bacterial persistence by HipA.</title>
        <authorList>
            <person name="Germain E."/>
            <person name="Castro-Roa D."/>
            <person name="Zenkin N."/>
            <person name="Gerdes K."/>
        </authorList>
    </citation>
    <scope>LACK OF PHOSPHORYLATION BY HIPA</scope>
    <source>
        <strain>K12 / MG1655 / ATCC 47076</strain>
    </source>
</reference>
<reference key="27">
    <citation type="journal article" date="2013" name="Nat. Chem. Biol.">
        <title>The Fic protein Doc uses an inverted substrate to phosphorylate and inactivate EF-Tu.</title>
        <authorList>
            <person name="Castro-Roa D."/>
            <person name="Garcia-Pino A."/>
            <person name="De Gieter S."/>
            <person name="van Nuland N.A."/>
            <person name="Loris R."/>
            <person name="Zenkin N."/>
        </authorList>
    </citation>
    <scope>PHOSPHORYLATION AT THR-383 BY DOC</scope>
    <scope>MUTAGENESIS OF THR-383</scope>
</reference>
<reference key="28">
    <citation type="journal article" date="2017" name="Proc. Natl. Acad. Sci. U.S.A.">
        <title>Activation of contact-dependent antibacterial tRNase toxins by translation elongation factors.</title>
        <authorList>
            <person name="Jones A.M."/>
            <person name="Garza-Sanchez F."/>
            <person name="So J."/>
            <person name="Hayes C.S."/>
            <person name="Low D.A."/>
        </authorList>
    </citation>
    <scope>FUNCTION IN CDI (MICROBIAL INFECTION)</scope>
    <scope>SUBUNIT</scope>
    <scope>INTERACTION WITH CDIA-CT-EC869 AND CDII-EC869 (MICROBIAL INFECTION)</scope>
    <source>
        <strain>K12 / MG1655 / ATCC 47076</strain>
    </source>
</reference>
<reference evidence="35" key="29">
    <citation type="journal article" date="1985" name="EMBO J.">
        <title>Structural details of the binding of guanosine diphosphate to elongation factor Tu from E. coli as studied by X-ray crystallography.</title>
        <authorList>
            <person name="la Cour T.F."/>
            <person name="Nyborg J."/>
            <person name="Thirup S."/>
            <person name="Clark B.F."/>
        </authorList>
    </citation>
    <scope>X-RAY CRYSTALLOGRAPHY (2.9 ANGSTROMS) OF 2-392 IN A MODIFIED FORM</scope>
</reference>
<reference evidence="34" key="30">
    <citation type="journal article" date="1999" name="J. Mol. Biol.">
        <title>Crystal structure of intact elongation factor EF-Tu from Escherichia coli in GDP conformation at 2.05-A resolution.</title>
        <authorList>
            <person name="Song H."/>
            <person name="Parsons M.R."/>
            <person name="Rowsell S."/>
            <person name="Leonard G."/>
            <person name="Phillips S.E.V."/>
        </authorList>
    </citation>
    <scope>X-RAY CRYSTALLOGRAPHY (2.05 ANGSTROMS) OF 2-394 IN COMPLEX WITH GDP</scope>
</reference>
<reference evidence="33" key="31">
    <citation type="journal article" date="2000" name="Biochemistry">
        <title>Structure of an EF-Tu complex with a thiazolyl peptide antibiotic determined at 2.35 A resolution: atomic basis for GE2270A inhibition of EF-Tu.</title>
        <authorList>
            <person name="Heffron S.E."/>
            <person name="Jurnak F."/>
        </authorList>
    </citation>
    <scope>X-RAY CRYSTALLOGRAPHY (2.35 ANGSTROMS) OF 2-393 IN COMPLEX WITH ANTIBIOTIC GE2270A</scope>
</reference>
<reference evidence="36" key="32">
    <citation type="journal article" date="2006" name="Acta Crystallogr. D">
        <title>Solving the structure of Escherichia coli elongation factor Tu using a twinned data set.</title>
        <authorList>
            <person name="Heffron S.E."/>
            <person name="Moeller R."/>
            <person name="Jurnak F."/>
        </authorList>
    </citation>
    <scope>X-RAY CRYSTALLOGRAPHY (3.4 ANGSTROMS) OF EF-TU-GDP</scope>
</reference>
<reference evidence="37 38" key="33">
    <citation type="journal article" date="2006" name="Acta Crystallogr. D">
        <title>Molecular complementarity between tetracycline and the GTPase active site of elongation factor Tu.</title>
        <authorList>
            <person name="Heffron S.E."/>
            <person name="Mui S."/>
            <person name="Aorora A."/>
            <person name="Abel K."/>
            <person name="Bergmann E."/>
            <person name="Jurnak F."/>
        </authorList>
    </citation>
    <scope>X-RAY CRYSTALLOGRAPHY (2.12 ANGSTROMS) OF 9-44 AND 60-393 IN COMPLEX WITH TETRACYCLINE</scope>
</reference>
<reference evidence="39 40" key="34">
    <citation type="journal article" date="2017" name="Nucleic Acids Res.">
        <title>Structure of a novel antibacterial toxin that exploits elongation factor Tu to cleave specific transfer RNAs.</title>
        <authorList>
            <person name="Michalska K."/>
            <person name="Gucinski G.C."/>
            <person name="Garza-Sanchez F."/>
            <person name="Johnson P.M."/>
            <person name="Stols L.M."/>
            <person name="Eschenfeldt W.H."/>
            <person name="Babnigg G."/>
            <person name="Low D.A."/>
            <person name="Goulding C.W."/>
            <person name="Joachimiak A."/>
            <person name="Hayes C.S."/>
        </authorList>
    </citation>
    <scope>X-RAY CRYSTALLOGRAPHY (2.35 ANGSTROMS) OF 178-394 IN COMPLEX WITH GDP; CDIA-CT-NC101 AND CDII-NC101</scope>
    <scope>FUNCTION IN CDI (MICROBIAL INFECTION)</scope>
</reference>
<reference evidence="41 42 43 44" key="35">
    <citation type="journal article" date="2018" name="Sci. Adv.">
        <title>Phosphorylation decelerates conformational dynamics in bacterial translation elongation factors.</title>
        <authorList>
            <person name="Talavera A."/>
            <person name="Hendrix J."/>
            <person name="Versees W."/>
            <person name="Jurenas D."/>
            <person name="Van Nerom K."/>
            <person name="Vandenberk N."/>
            <person name="Singh R.K."/>
            <person name="Konijnenberg A."/>
            <person name="De Gieter S."/>
            <person name="Castro-Roa D."/>
            <person name="Barth A."/>
            <person name="De Greve H."/>
            <person name="Sobott F."/>
            <person name="Hofkens J."/>
            <person name="Zenkin N."/>
            <person name="Loris R."/>
            <person name="Garcia-Pino A."/>
        </authorList>
    </citation>
    <scope>X-RAY CRYSTALLOGRAPHY (2.18 ANGSTROMS) OF PHOSPHORYLATED FORM OF WILD-TYPE AND MUTANTS GLU-62 AND GLU-383 IN COMPLEX WITH GDP; GTP AND MG(2+)</scope>
    <scope>PHOSPHORYLATION AT THR-383 BY DOC</scope>
    <scope>MUTAGENESIS OF THR-62 AND THR-383</scope>
    <scope>ACTIVITY REGULATION</scope>
    <source>
        <strain>HS</strain>
        <strain>K12</strain>
    </source>
</reference>
<keyword id="KW-0002">3D-structure</keyword>
<keyword id="KW-0007">Acetylation</keyword>
<keyword id="KW-0046">Antibiotic resistance</keyword>
<keyword id="KW-0997">Cell inner membrane</keyword>
<keyword id="KW-1003">Cell membrane</keyword>
<keyword id="KW-0963">Cytoplasm</keyword>
<keyword id="KW-0903">Direct protein sequencing</keyword>
<keyword id="KW-0251">Elongation factor</keyword>
<keyword id="KW-0342">GTP-binding</keyword>
<keyword id="KW-0378">Hydrolase</keyword>
<keyword id="KW-0460">Magnesium</keyword>
<keyword id="KW-0472">Membrane</keyword>
<keyword id="KW-0479">Metal-binding</keyword>
<keyword id="KW-0488">Methylation</keyword>
<keyword id="KW-0547">Nucleotide-binding</keyword>
<keyword id="KW-0597">Phosphoprotein</keyword>
<keyword id="KW-0648">Protein biosynthesis</keyword>
<keyword id="KW-1185">Reference proteome</keyword>
<keyword id="KW-0694">RNA-binding</keyword>
<protein>
    <recommendedName>
        <fullName evidence="4">Elongation factor Tu 1</fullName>
        <shortName evidence="4">EF-Tu 1</shortName>
        <ecNumber evidence="11 16">3.6.5.3</ecNumber>
    </recommendedName>
    <alternativeName>
        <fullName evidence="30">Bacteriophage Q beta RNA-directed RNA polymerase subunit III</fullName>
    </alternativeName>
    <alternativeName>
        <fullName>P-43</fullName>
    </alternativeName>
</protein>
<dbReference type="EC" id="3.6.5.3" evidence="11 16"/>
<dbReference type="EMBL" id="AH002539">
    <property type="protein sequence ID" value="AAA50993.1"/>
    <property type="molecule type" value="Genomic_DNA"/>
</dbReference>
<dbReference type="EMBL" id="M10459">
    <property type="protein sequence ID" value="AAA24702.1"/>
    <property type="molecule type" value="Genomic_DNA"/>
</dbReference>
<dbReference type="EMBL" id="U00096">
    <property type="protein sequence ID" value="AAC76364.1"/>
    <property type="molecule type" value="Genomic_DNA"/>
</dbReference>
<dbReference type="EMBL" id="AP009048">
    <property type="protein sequence ID" value="BAE77952.1"/>
    <property type="molecule type" value="Genomic_DNA"/>
</dbReference>
<dbReference type="EMBL" id="U18997">
    <property type="protein sequence ID" value="AAA58136.1"/>
    <property type="molecule type" value="Genomic_DNA"/>
</dbReference>
<dbReference type="EMBL" id="AF058450">
    <property type="protein sequence ID" value="AAC14286.1"/>
    <property type="molecule type" value="Genomic_DNA"/>
</dbReference>
<dbReference type="PIR" id="A91475">
    <property type="entry name" value="EFECTA"/>
</dbReference>
<dbReference type="RefSeq" id="NP_417798.1">
    <property type="nucleotide sequence ID" value="NC_000913.3"/>
</dbReference>
<dbReference type="PDB" id="1D8T">
    <property type="method" value="X-ray"/>
    <property type="resolution" value="2.35 A"/>
    <property type="chains" value="A/B=2-394"/>
</dbReference>
<dbReference type="PDB" id="1EFC">
    <property type="method" value="X-ray"/>
    <property type="resolution" value="2.05 A"/>
    <property type="chains" value="A/B=2-393"/>
</dbReference>
<dbReference type="PDB" id="1ETU">
    <property type="method" value="X-ray"/>
    <property type="resolution" value="2.90 A"/>
    <property type="chains" value="A=2-394"/>
</dbReference>
<dbReference type="PDB" id="1MJ1">
    <property type="method" value="EM"/>
    <property type="resolution" value="13.00 A"/>
    <property type="chains" value="A=8-389"/>
</dbReference>
<dbReference type="PDB" id="2FX3">
    <property type="method" value="X-ray"/>
    <property type="resolution" value="3.40 A"/>
    <property type="chains" value="A=2-394"/>
</dbReference>
<dbReference type="PDB" id="2HCJ">
    <property type="method" value="X-ray"/>
    <property type="resolution" value="2.12 A"/>
    <property type="chains" value="A=9-45, B=60-394"/>
</dbReference>
<dbReference type="PDB" id="2HDN">
    <property type="method" value="X-ray"/>
    <property type="resolution" value="2.80 A"/>
    <property type="chains" value="A/C/E/G/I/K=9-45, B/D/F/H/J/L=60-394"/>
</dbReference>
<dbReference type="PDB" id="3EP2">
    <property type="method" value="EM"/>
    <property type="chains" value="X=2-393"/>
</dbReference>
<dbReference type="PDB" id="3EQ3">
    <property type="method" value="EM"/>
    <property type="chains" value="X=2-393"/>
</dbReference>
<dbReference type="PDB" id="3EQ4">
    <property type="method" value="EM"/>
    <property type="chains" value="X=2-393"/>
</dbReference>
<dbReference type="PDB" id="3U2Q">
    <property type="method" value="X-ray"/>
    <property type="resolution" value="2.70 A"/>
    <property type="chains" value="A=3-394"/>
</dbReference>
<dbReference type="PDB" id="3U6B">
    <property type="method" value="X-ray"/>
    <property type="resolution" value="2.12 A"/>
    <property type="chains" value="A/B=3-394"/>
</dbReference>
<dbReference type="PDB" id="3U6K">
    <property type="method" value="X-ray"/>
    <property type="resolution" value="2.45 A"/>
    <property type="chains" value="A/B=3-394"/>
</dbReference>
<dbReference type="PDB" id="4G5G">
    <property type="method" value="X-ray"/>
    <property type="resolution" value="2.30 A"/>
    <property type="chains" value="A=3-394"/>
</dbReference>
<dbReference type="PDB" id="4P3Y">
    <property type="method" value="X-ray"/>
    <property type="resolution" value="2.15 A"/>
    <property type="chains" value="A=1-394"/>
</dbReference>
<dbReference type="PDB" id="4PC3">
    <property type="method" value="X-ray"/>
    <property type="resolution" value="1.83 A"/>
    <property type="chains" value="A/B=1-394"/>
</dbReference>
<dbReference type="PDB" id="4PC7">
    <property type="method" value="X-ray"/>
    <property type="resolution" value="3.60 A"/>
    <property type="chains" value="A=1-394"/>
</dbReference>
<dbReference type="PDB" id="4Q7J">
    <property type="method" value="X-ray"/>
    <property type="resolution" value="2.90 A"/>
    <property type="chains" value="B/F=2-394"/>
</dbReference>
<dbReference type="PDB" id="4V69">
    <property type="method" value="EM"/>
    <property type="resolution" value="6.70 A"/>
    <property type="chains" value="AZ=2-393"/>
</dbReference>
<dbReference type="PDB" id="5I4Q">
    <property type="method" value="X-ray"/>
    <property type="resolution" value="2.35 A"/>
    <property type="chains" value="C=178-394"/>
</dbReference>
<dbReference type="PDB" id="5I4R">
    <property type="method" value="X-ray"/>
    <property type="resolution" value="3.30 A"/>
    <property type="chains" value="D/H=60-394"/>
</dbReference>
<dbReference type="PDB" id="5JBQ">
    <property type="method" value="X-ray"/>
    <property type="resolution" value="2.01 A"/>
    <property type="chains" value="A=1-394"/>
</dbReference>
<dbReference type="PDB" id="5MI3">
    <property type="method" value="X-ray"/>
    <property type="resolution" value="2.80 A"/>
    <property type="chains" value="A/B=2-394"/>
</dbReference>
<dbReference type="PDB" id="5MI8">
    <property type="method" value="X-ray"/>
    <property type="resolution" value="2.18 A"/>
    <property type="chains" value="A/B=2-394"/>
</dbReference>
<dbReference type="PDB" id="5MI9">
    <property type="method" value="X-ray"/>
    <property type="resolution" value="3.30 A"/>
    <property type="chains" value="A/B=2-394"/>
</dbReference>
<dbReference type="PDB" id="5OPD">
    <property type="method" value="X-ray"/>
    <property type="resolution" value="2.75 A"/>
    <property type="chains" value="A/B=1-394"/>
</dbReference>
<dbReference type="PDB" id="5UYK">
    <property type="method" value="EM"/>
    <property type="resolution" value="3.90 A"/>
    <property type="chains" value="Z=2-393"/>
</dbReference>
<dbReference type="PDB" id="5UYL">
    <property type="method" value="EM"/>
    <property type="resolution" value="3.60 A"/>
    <property type="chains" value="Z=2-393"/>
</dbReference>
<dbReference type="PDB" id="5UYM">
    <property type="method" value="EM"/>
    <property type="resolution" value="3.20 A"/>
    <property type="chains" value="Z=2-393"/>
</dbReference>
<dbReference type="PDB" id="5UYN">
    <property type="method" value="EM"/>
    <property type="resolution" value="4.00 A"/>
    <property type="chains" value="Z=2-393"/>
</dbReference>
<dbReference type="PDB" id="5UYP">
    <property type="method" value="EM"/>
    <property type="resolution" value="3.90 A"/>
    <property type="chains" value="Z=2-393"/>
</dbReference>
<dbReference type="PDB" id="5UYQ">
    <property type="method" value="EM"/>
    <property type="resolution" value="3.80 A"/>
    <property type="chains" value="Z=2-393"/>
</dbReference>
<dbReference type="PDB" id="6WD2">
    <property type="method" value="EM"/>
    <property type="resolution" value="3.60 A"/>
    <property type="chains" value="8=2-394"/>
</dbReference>
<dbReference type="PDB" id="6WD3">
    <property type="method" value="EM"/>
    <property type="resolution" value="3.60 A"/>
    <property type="chains" value="8=2-394"/>
</dbReference>
<dbReference type="PDB" id="6WD4">
    <property type="method" value="EM"/>
    <property type="resolution" value="3.70 A"/>
    <property type="chains" value="8=2-394"/>
</dbReference>
<dbReference type="PDB" id="6WD5">
    <property type="method" value="EM"/>
    <property type="resolution" value="3.60 A"/>
    <property type="chains" value="8=2-394"/>
</dbReference>
<dbReference type="PDB" id="6WD6">
    <property type="method" value="EM"/>
    <property type="resolution" value="3.70 A"/>
    <property type="chains" value="8=2-394"/>
</dbReference>
<dbReference type="PDB" id="6WD7">
    <property type="method" value="EM"/>
    <property type="resolution" value="3.90 A"/>
    <property type="chains" value="8=2-394"/>
</dbReference>
<dbReference type="PDB" id="6WD8">
    <property type="method" value="EM"/>
    <property type="resolution" value="3.70 A"/>
    <property type="chains" value="8=2-394"/>
</dbReference>
<dbReference type="PDB" id="6WD9">
    <property type="method" value="EM"/>
    <property type="resolution" value="3.70 A"/>
    <property type="chains" value="8=2-394"/>
</dbReference>
<dbReference type="PDB" id="6WDA">
    <property type="method" value="EM"/>
    <property type="resolution" value="3.80 A"/>
    <property type="chains" value="8=2-394"/>
</dbReference>
<dbReference type="PDB" id="8FR3">
    <property type="method" value="X-ray"/>
    <property type="resolution" value="2.23 A"/>
    <property type="chains" value="A/B=1-394"/>
</dbReference>
<dbReference type="PDB" id="8G7P">
    <property type="method" value="EM"/>
    <property type="resolution" value="2.90 A"/>
    <property type="chains" value="z=2-393"/>
</dbReference>
<dbReference type="PDBsum" id="1D8T"/>
<dbReference type="PDBsum" id="1EFC"/>
<dbReference type="PDBsum" id="1ETU"/>
<dbReference type="PDBsum" id="1MJ1"/>
<dbReference type="PDBsum" id="2FX3"/>
<dbReference type="PDBsum" id="2HCJ"/>
<dbReference type="PDBsum" id="2HDN"/>
<dbReference type="PDBsum" id="3EP2"/>
<dbReference type="PDBsum" id="3EQ3"/>
<dbReference type="PDBsum" id="3EQ4"/>
<dbReference type="PDBsum" id="3U2Q"/>
<dbReference type="PDBsum" id="3U6B"/>
<dbReference type="PDBsum" id="3U6K"/>
<dbReference type="PDBsum" id="4G5G"/>
<dbReference type="PDBsum" id="4P3Y"/>
<dbReference type="PDBsum" id="4PC3"/>
<dbReference type="PDBsum" id="4PC7"/>
<dbReference type="PDBsum" id="4Q7J"/>
<dbReference type="PDBsum" id="4V69"/>
<dbReference type="PDBsum" id="5I4Q"/>
<dbReference type="PDBsum" id="5I4R"/>
<dbReference type="PDBsum" id="5JBQ"/>
<dbReference type="PDBsum" id="5MI3"/>
<dbReference type="PDBsum" id="5MI8"/>
<dbReference type="PDBsum" id="5MI9"/>
<dbReference type="PDBsum" id="5OPD"/>
<dbReference type="PDBsum" id="5UYK"/>
<dbReference type="PDBsum" id="5UYL"/>
<dbReference type="PDBsum" id="5UYM"/>
<dbReference type="PDBsum" id="5UYN"/>
<dbReference type="PDBsum" id="5UYP"/>
<dbReference type="PDBsum" id="5UYQ"/>
<dbReference type="PDBsum" id="6WD2"/>
<dbReference type="PDBsum" id="6WD3"/>
<dbReference type="PDBsum" id="6WD4"/>
<dbReference type="PDBsum" id="6WD5"/>
<dbReference type="PDBsum" id="6WD6"/>
<dbReference type="PDBsum" id="6WD7"/>
<dbReference type="PDBsum" id="6WD8"/>
<dbReference type="PDBsum" id="6WD9"/>
<dbReference type="PDBsum" id="6WDA"/>
<dbReference type="PDBsum" id="8FR3"/>
<dbReference type="PDBsum" id="8G7P"/>
<dbReference type="EMDB" id="EMD-3112"/>
<dbReference type="EMDB" id="EMD-3113"/>
<dbReference type="EMDB" id="EMD-5036"/>
<dbReference type="EMDB" id="EMD-8615"/>
<dbReference type="EMDB" id="EMD-8616"/>
<dbReference type="EMDB" id="EMD-8617"/>
<dbReference type="EMDB" id="EMD-8618"/>
<dbReference type="EMDB" id="EMD-8619"/>
<dbReference type="EMDB" id="EMD-8620"/>
<dbReference type="SMR" id="P0CE47"/>
<dbReference type="BioGRID" id="4259390">
    <property type="interactions" value="80"/>
</dbReference>
<dbReference type="BioGRID" id="852150">
    <property type="interactions" value="1"/>
</dbReference>
<dbReference type="ComplexPortal" id="CPX-6035">
    <property type="entry name" value="Elongation Factor TU-TS, tufA variant"/>
</dbReference>
<dbReference type="DIP" id="DIP-6159N"/>
<dbReference type="FunCoup" id="P0CE47">
    <property type="interactions" value="1087"/>
</dbReference>
<dbReference type="IntAct" id="P0CE47">
    <property type="interactions" value="211"/>
</dbReference>
<dbReference type="STRING" id="511145.b3339"/>
<dbReference type="CarbonylDB" id="P0CE47"/>
<dbReference type="iPTMnet" id="P0CE47"/>
<dbReference type="jPOST" id="P0CE47"/>
<dbReference type="PaxDb" id="511145-b3339"/>
<dbReference type="EnsemblBacteria" id="AAC76364">
    <property type="protein sequence ID" value="AAC76364"/>
    <property type="gene ID" value="b3339"/>
</dbReference>
<dbReference type="GeneID" id="947838"/>
<dbReference type="KEGG" id="ecj:JW3301"/>
<dbReference type="KEGG" id="eco:b3339"/>
<dbReference type="KEGG" id="ecoc:C3026_18135"/>
<dbReference type="PATRIC" id="fig|1411691.4.peg.3392"/>
<dbReference type="EchoBASE" id="EB1029"/>
<dbReference type="eggNOG" id="COG0050">
    <property type="taxonomic scope" value="Bacteria"/>
</dbReference>
<dbReference type="HOGENOM" id="CLU_007265_0_2_6"/>
<dbReference type="InParanoid" id="P0CE47"/>
<dbReference type="OMA" id="KTHANIG"/>
<dbReference type="OrthoDB" id="9803139at2"/>
<dbReference type="PhylomeDB" id="P0CE47"/>
<dbReference type="BioCyc" id="EcoCyc:EG11036-MONOMER"/>
<dbReference type="BRENDA" id="3.6.5.3">
    <property type="organism ID" value="2026"/>
</dbReference>
<dbReference type="EvolutionaryTrace" id="P0CE47"/>
<dbReference type="PRO" id="PR:P0CE47"/>
<dbReference type="Proteomes" id="UP000000625">
    <property type="component" value="Chromosome"/>
</dbReference>
<dbReference type="GO" id="GO:0005737">
    <property type="term" value="C:cytoplasm"/>
    <property type="evidence" value="ECO:0007005"/>
    <property type="project" value="UniProtKB"/>
</dbReference>
<dbReference type="GO" id="GO:0032045">
    <property type="term" value="C:guanyl-nucleotide exchange factor complex"/>
    <property type="evidence" value="ECO:0000353"/>
    <property type="project" value="ComplexPortal"/>
</dbReference>
<dbReference type="GO" id="GO:0005886">
    <property type="term" value="C:plasma membrane"/>
    <property type="evidence" value="ECO:0007669"/>
    <property type="project" value="UniProtKB-SubCell"/>
</dbReference>
<dbReference type="GO" id="GO:0005525">
    <property type="term" value="F:GTP binding"/>
    <property type="evidence" value="ECO:0000314"/>
    <property type="project" value="UniProtKB"/>
</dbReference>
<dbReference type="GO" id="GO:0003924">
    <property type="term" value="F:GTPase activity"/>
    <property type="evidence" value="ECO:0000314"/>
    <property type="project" value="UniProtKB"/>
</dbReference>
<dbReference type="GO" id="GO:0097216">
    <property type="term" value="F:guanosine tetraphosphate binding"/>
    <property type="evidence" value="ECO:0000314"/>
    <property type="project" value="EcoCyc"/>
</dbReference>
<dbReference type="GO" id="GO:0000287">
    <property type="term" value="F:magnesium ion binding"/>
    <property type="evidence" value="ECO:0000314"/>
    <property type="project" value="UniProtKB"/>
</dbReference>
<dbReference type="GO" id="GO:0003723">
    <property type="term" value="F:RNA binding"/>
    <property type="evidence" value="ECO:0007669"/>
    <property type="project" value="UniProtKB-KW"/>
</dbReference>
<dbReference type="GO" id="GO:0003746">
    <property type="term" value="F:translation elongation factor activity"/>
    <property type="evidence" value="ECO:0000318"/>
    <property type="project" value="GO_Central"/>
</dbReference>
<dbReference type="GO" id="GO:0046677">
    <property type="term" value="P:response to antibiotic"/>
    <property type="evidence" value="ECO:0007669"/>
    <property type="project" value="UniProtKB-KW"/>
</dbReference>
<dbReference type="GO" id="GO:0006414">
    <property type="term" value="P:translational elongation"/>
    <property type="evidence" value="ECO:0000318"/>
    <property type="project" value="GO_Central"/>
</dbReference>
<dbReference type="CDD" id="cd01884">
    <property type="entry name" value="EF_Tu"/>
    <property type="match status" value="1"/>
</dbReference>
<dbReference type="CDD" id="cd03697">
    <property type="entry name" value="EFTU_II"/>
    <property type="match status" value="1"/>
</dbReference>
<dbReference type="CDD" id="cd03707">
    <property type="entry name" value="EFTU_III"/>
    <property type="match status" value="1"/>
</dbReference>
<dbReference type="FunFam" id="2.40.30.10:FF:000001">
    <property type="entry name" value="Elongation factor Tu"/>
    <property type="match status" value="1"/>
</dbReference>
<dbReference type="FunFam" id="3.40.50.300:FF:000003">
    <property type="entry name" value="Elongation factor Tu"/>
    <property type="match status" value="1"/>
</dbReference>
<dbReference type="Gene3D" id="3.40.50.300">
    <property type="entry name" value="P-loop containing nucleotide triphosphate hydrolases"/>
    <property type="match status" value="1"/>
</dbReference>
<dbReference type="Gene3D" id="2.40.30.10">
    <property type="entry name" value="Translation factors"/>
    <property type="match status" value="2"/>
</dbReference>
<dbReference type="HAMAP" id="MF_00118_B">
    <property type="entry name" value="EF_Tu_B"/>
    <property type="match status" value="1"/>
</dbReference>
<dbReference type="InterPro" id="IPR041709">
    <property type="entry name" value="EF-Tu_GTP-bd"/>
</dbReference>
<dbReference type="InterPro" id="IPR050055">
    <property type="entry name" value="EF-Tu_GTPase"/>
</dbReference>
<dbReference type="InterPro" id="IPR004161">
    <property type="entry name" value="EFTu-like_2"/>
</dbReference>
<dbReference type="InterPro" id="IPR033720">
    <property type="entry name" value="EFTU_2"/>
</dbReference>
<dbReference type="InterPro" id="IPR031157">
    <property type="entry name" value="G_TR_CS"/>
</dbReference>
<dbReference type="InterPro" id="IPR027417">
    <property type="entry name" value="P-loop_NTPase"/>
</dbReference>
<dbReference type="InterPro" id="IPR005225">
    <property type="entry name" value="Small_GTP-bd"/>
</dbReference>
<dbReference type="InterPro" id="IPR000795">
    <property type="entry name" value="T_Tr_GTP-bd_dom"/>
</dbReference>
<dbReference type="InterPro" id="IPR009000">
    <property type="entry name" value="Transl_B-barrel_sf"/>
</dbReference>
<dbReference type="InterPro" id="IPR009001">
    <property type="entry name" value="Transl_elong_EF1A/Init_IF2_C"/>
</dbReference>
<dbReference type="InterPro" id="IPR004541">
    <property type="entry name" value="Transl_elong_EFTu/EF1A_bac/org"/>
</dbReference>
<dbReference type="InterPro" id="IPR004160">
    <property type="entry name" value="Transl_elong_EFTu/EF1A_C"/>
</dbReference>
<dbReference type="NCBIfam" id="TIGR00485">
    <property type="entry name" value="EF-Tu"/>
    <property type="match status" value="1"/>
</dbReference>
<dbReference type="NCBIfam" id="NF000766">
    <property type="entry name" value="PRK00049.1"/>
    <property type="match status" value="1"/>
</dbReference>
<dbReference type="NCBIfam" id="NF009372">
    <property type="entry name" value="PRK12735.1"/>
    <property type="match status" value="1"/>
</dbReference>
<dbReference type="NCBIfam" id="NF009373">
    <property type="entry name" value="PRK12736.1"/>
    <property type="match status" value="1"/>
</dbReference>
<dbReference type="NCBIfam" id="TIGR00231">
    <property type="entry name" value="small_GTP"/>
    <property type="match status" value="1"/>
</dbReference>
<dbReference type="PANTHER" id="PTHR43721:SF22">
    <property type="entry name" value="ELONGATION FACTOR TU, MITOCHONDRIAL"/>
    <property type="match status" value="1"/>
</dbReference>
<dbReference type="PANTHER" id="PTHR43721">
    <property type="entry name" value="ELONGATION FACTOR TU-RELATED"/>
    <property type="match status" value="1"/>
</dbReference>
<dbReference type="Pfam" id="PF00009">
    <property type="entry name" value="GTP_EFTU"/>
    <property type="match status" value="1"/>
</dbReference>
<dbReference type="Pfam" id="PF03144">
    <property type="entry name" value="GTP_EFTU_D2"/>
    <property type="match status" value="1"/>
</dbReference>
<dbReference type="Pfam" id="PF03143">
    <property type="entry name" value="GTP_EFTU_D3"/>
    <property type="match status" value="1"/>
</dbReference>
<dbReference type="PRINTS" id="PR00315">
    <property type="entry name" value="ELONGATNFCT"/>
</dbReference>
<dbReference type="SUPFAM" id="SSF50465">
    <property type="entry name" value="EF-Tu/eEF-1alpha/eIF2-gamma C-terminal domain"/>
    <property type="match status" value="1"/>
</dbReference>
<dbReference type="SUPFAM" id="SSF52540">
    <property type="entry name" value="P-loop containing nucleoside triphosphate hydrolases"/>
    <property type="match status" value="1"/>
</dbReference>
<dbReference type="SUPFAM" id="SSF50447">
    <property type="entry name" value="Translation proteins"/>
    <property type="match status" value="1"/>
</dbReference>
<dbReference type="PROSITE" id="PS00301">
    <property type="entry name" value="G_TR_1"/>
    <property type="match status" value="1"/>
</dbReference>
<dbReference type="PROSITE" id="PS51722">
    <property type="entry name" value="G_TR_2"/>
    <property type="match status" value="1"/>
</dbReference>
<organism>
    <name type="scientific">Escherichia coli (strain K12)</name>
    <dbReference type="NCBI Taxonomy" id="83333"/>
    <lineage>
        <taxon>Bacteria</taxon>
        <taxon>Pseudomonadati</taxon>
        <taxon>Pseudomonadota</taxon>
        <taxon>Gammaproteobacteria</taxon>
        <taxon>Enterobacterales</taxon>
        <taxon>Enterobacteriaceae</taxon>
        <taxon>Escherichia</taxon>
    </lineage>
</organism>
<gene>
    <name evidence="4" type="primary">tufA</name>
    <name type="ordered locus">b3339</name>
    <name type="ordered locus">JW3301</name>
</gene>
<evidence type="ECO:0000250" key="1"/>
<evidence type="ECO:0000250" key="2">
    <source>
        <dbReference type="UniProtKB" id="P0CE48"/>
    </source>
</evidence>
<evidence type="ECO:0000250" key="3">
    <source>
        <dbReference type="UniProtKB" id="Q5SHN6"/>
    </source>
</evidence>
<evidence type="ECO:0000255" key="4">
    <source>
        <dbReference type="HAMAP-Rule" id="MF_00118"/>
    </source>
</evidence>
<evidence type="ECO:0000269" key="5">
    <source>
    </source>
</evidence>
<evidence type="ECO:0000269" key="6">
    <source>
    </source>
</evidence>
<evidence type="ECO:0000269" key="7">
    <source>
    </source>
</evidence>
<evidence type="ECO:0000269" key="8">
    <source>
    </source>
</evidence>
<evidence type="ECO:0000269" key="9">
    <source>
    </source>
</evidence>
<evidence type="ECO:0000269" key="10">
    <source>
    </source>
</evidence>
<evidence type="ECO:0000269" key="11">
    <source>
    </source>
</evidence>
<evidence type="ECO:0000269" key="12">
    <source>
    </source>
</evidence>
<evidence type="ECO:0000269" key="13">
    <source>
    </source>
</evidence>
<evidence type="ECO:0000269" key="14">
    <source>
    </source>
</evidence>
<evidence type="ECO:0000269" key="15">
    <source>
    </source>
</evidence>
<evidence type="ECO:0000269" key="16">
    <source>
    </source>
</evidence>
<evidence type="ECO:0000269" key="17">
    <source>
    </source>
</evidence>
<evidence type="ECO:0000269" key="18">
    <source>
    </source>
</evidence>
<evidence type="ECO:0000269" key="19">
    <source>
    </source>
</evidence>
<evidence type="ECO:0000269" key="20">
    <source>
    </source>
</evidence>
<evidence type="ECO:0000269" key="21">
    <source>
    </source>
</evidence>
<evidence type="ECO:0000269" key="22">
    <source>
    </source>
</evidence>
<evidence type="ECO:0000269" key="23">
    <source>
    </source>
</evidence>
<evidence type="ECO:0000269" key="24">
    <source>
    </source>
</evidence>
<evidence type="ECO:0000269" key="25">
    <source>
    </source>
</evidence>
<evidence type="ECO:0000269" key="26">
    <source>
    </source>
</evidence>
<evidence type="ECO:0000269" key="27">
    <source>
    </source>
</evidence>
<evidence type="ECO:0000269" key="28">
    <source>
    </source>
</evidence>
<evidence type="ECO:0000269" key="29">
    <source>
    </source>
</evidence>
<evidence type="ECO:0000303" key="30">
    <source>
    </source>
</evidence>
<evidence type="ECO:0000305" key="31"/>
<evidence type="ECO:0000305" key="32">
    <source>
    </source>
</evidence>
<evidence type="ECO:0007744" key="33">
    <source>
        <dbReference type="PDB" id="1D8T"/>
    </source>
</evidence>
<evidence type="ECO:0007744" key="34">
    <source>
        <dbReference type="PDB" id="1EFC"/>
    </source>
</evidence>
<evidence type="ECO:0007744" key="35">
    <source>
        <dbReference type="PDB" id="1ETU"/>
    </source>
</evidence>
<evidence type="ECO:0007744" key="36">
    <source>
        <dbReference type="PDB" id="2FX3"/>
    </source>
</evidence>
<evidence type="ECO:0007744" key="37">
    <source>
        <dbReference type="PDB" id="2HCJ"/>
    </source>
</evidence>
<evidence type="ECO:0007744" key="38">
    <source>
        <dbReference type="PDB" id="2HDN"/>
    </source>
</evidence>
<evidence type="ECO:0007744" key="39">
    <source>
        <dbReference type="PDB" id="5I4Q"/>
    </source>
</evidence>
<evidence type="ECO:0007744" key="40">
    <source>
        <dbReference type="PDB" id="5I4R"/>
    </source>
</evidence>
<evidence type="ECO:0007744" key="41">
    <source>
        <dbReference type="PDB" id="5MI3"/>
    </source>
</evidence>
<evidence type="ECO:0007744" key="42">
    <source>
        <dbReference type="PDB" id="5MI8"/>
    </source>
</evidence>
<evidence type="ECO:0007744" key="43">
    <source>
        <dbReference type="PDB" id="5MI9"/>
    </source>
</evidence>
<evidence type="ECO:0007744" key="44">
    <source>
        <dbReference type="PDB" id="5OPD"/>
    </source>
</evidence>
<evidence type="ECO:0007829" key="45">
    <source>
        <dbReference type="PDB" id="1ETU"/>
    </source>
</evidence>
<evidence type="ECO:0007829" key="46">
    <source>
        <dbReference type="PDB" id="3U6B"/>
    </source>
</evidence>
<evidence type="ECO:0007829" key="47">
    <source>
        <dbReference type="PDB" id="3U6K"/>
    </source>
</evidence>
<evidence type="ECO:0007829" key="48">
    <source>
        <dbReference type="PDB" id="4PC3"/>
    </source>
</evidence>
<evidence type="ECO:0007829" key="49">
    <source>
        <dbReference type="PDB" id="4Q7J"/>
    </source>
</evidence>
<evidence type="ECO:0007829" key="50">
    <source>
        <dbReference type="PDB" id="5JBQ"/>
    </source>
</evidence>
<accession>P0CE47</accession>
<accession>O68929</accession>
<accession>P02990</accession>
<accession>P0A6N1</accession>
<accession>Q2M704</accession>
<accession>Q2M8R6</accession>
<accession>Q8X4S9</accession>
<accession>Q8XED3</accession>
<feature type="initiator methionine" description="Removed" evidence="22 23">
    <location>
        <position position="1"/>
    </location>
</feature>
<feature type="chain" id="PRO_0000091320" description="Elongation factor Tu 1">
    <location>
        <begin position="2"/>
        <end position="394"/>
    </location>
</feature>
<feature type="domain" description="tr-type G">
    <location>
        <begin position="10"/>
        <end position="204"/>
    </location>
</feature>
<feature type="region of interest" description="G1" evidence="1">
    <location>
        <begin position="19"/>
        <end position="26"/>
    </location>
</feature>
<feature type="region of interest" description="G2" evidence="1">
    <location>
        <begin position="60"/>
        <end position="64"/>
    </location>
</feature>
<feature type="region of interest" description="G3" evidence="1">
    <location>
        <begin position="81"/>
        <end position="84"/>
    </location>
</feature>
<feature type="region of interest" description="G4" evidence="1">
    <location>
        <begin position="136"/>
        <end position="139"/>
    </location>
</feature>
<feature type="region of interest" description="G5" evidence="1">
    <location>
        <begin position="174"/>
        <end position="176"/>
    </location>
</feature>
<feature type="binding site" evidence="19 41">
    <location>
        <position position="22"/>
    </location>
    <ligand>
        <name>GDP</name>
        <dbReference type="ChEBI" id="CHEBI:58189"/>
    </ligand>
</feature>
<feature type="binding site" evidence="19 44">
    <location>
        <position position="22"/>
    </location>
    <ligand>
        <name>GTP</name>
        <dbReference type="ChEBI" id="CHEBI:37565"/>
    </ligand>
</feature>
<feature type="binding site" evidence="19 41">
    <location>
        <position position="24"/>
    </location>
    <ligand>
        <name>GDP</name>
        <dbReference type="ChEBI" id="CHEBI:58189"/>
    </ligand>
</feature>
<feature type="binding site" evidence="19 44">
    <location>
        <position position="24"/>
    </location>
    <ligand>
        <name>GTP</name>
        <dbReference type="ChEBI" id="CHEBI:37565"/>
    </ligand>
</feature>
<feature type="binding site" evidence="19 41">
    <location>
        <position position="25"/>
    </location>
    <ligand>
        <name>GDP</name>
        <dbReference type="ChEBI" id="CHEBI:58189"/>
    </ligand>
</feature>
<feature type="binding site" evidence="19 44">
    <location>
        <position position="25"/>
    </location>
    <ligand>
        <name>GTP</name>
        <dbReference type="ChEBI" id="CHEBI:37565"/>
    </ligand>
</feature>
<feature type="binding site" evidence="19 41">
    <location>
        <position position="26"/>
    </location>
    <ligand>
        <name>GDP</name>
        <dbReference type="ChEBI" id="CHEBI:58189"/>
    </ligand>
</feature>
<feature type="binding site" evidence="19 44">
    <location>
        <position position="26"/>
    </location>
    <ligand>
        <name>GTP</name>
        <dbReference type="ChEBI" id="CHEBI:37565"/>
    </ligand>
</feature>
<feature type="binding site" evidence="19 41 44">
    <location>
        <position position="26"/>
    </location>
    <ligand>
        <name>Mg(2+)</name>
        <dbReference type="ChEBI" id="CHEBI:18420"/>
    </ligand>
</feature>
<feature type="binding site" evidence="19 41">
    <location>
        <position position="27"/>
    </location>
    <ligand>
        <name>GDP</name>
        <dbReference type="ChEBI" id="CHEBI:58189"/>
    </ligand>
</feature>
<feature type="binding site" evidence="19 44">
    <location>
        <position position="27"/>
    </location>
    <ligand>
        <name>GTP</name>
        <dbReference type="ChEBI" id="CHEBI:37565"/>
    </ligand>
</feature>
<feature type="binding site" evidence="19 41">
    <location>
        <position position="136"/>
    </location>
    <ligand>
        <name>GDP</name>
        <dbReference type="ChEBI" id="CHEBI:58189"/>
    </ligand>
</feature>
<feature type="binding site" evidence="19 44">
    <location>
        <position position="136"/>
    </location>
    <ligand>
        <name>GTP</name>
        <dbReference type="ChEBI" id="CHEBI:37565"/>
    </ligand>
</feature>
<feature type="binding site" evidence="19 41">
    <location>
        <position position="139"/>
    </location>
    <ligand>
        <name>GDP</name>
        <dbReference type="ChEBI" id="CHEBI:58189"/>
    </ligand>
</feature>
<feature type="binding site" evidence="19 44">
    <location>
        <position position="139"/>
    </location>
    <ligand>
        <name>GTP</name>
        <dbReference type="ChEBI" id="CHEBI:37565"/>
    </ligand>
</feature>
<feature type="binding site" evidence="19 41">
    <location>
        <position position="174"/>
    </location>
    <ligand>
        <name>GDP</name>
        <dbReference type="ChEBI" id="CHEBI:58189"/>
    </ligand>
</feature>
<feature type="binding site" evidence="19 44">
    <location>
        <position position="174"/>
    </location>
    <ligand>
        <name>GTP</name>
        <dbReference type="ChEBI" id="CHEBI:37565"/>
    </ligand>
</feature>
<feature type="binding site" evidence="19 41">
    <location>
        <position position="175"/>
    </location>
    <ligand>
        <name>GDP</name>
        <dbReference type="ChEBI" id="CHEBI:58189"/>
    </ligand>
</feature>
<feature type="binding site" evidence="19 44">
    <location>
        <position position="175"/>
    </location>
    <ligand>
        <name>GTP</name>
        <dbReference type="ChEBI" id="CHEBI:37565"/>
    </ligand>
</feature>
<feature type="binding site" evidence="19 41">
    <location>
        <position position="176"/>
    </location>
    <ligand>
        <name>GDP</name>
        <dbReference type="ChEBI" id="CHEBI:58189"/>
    </ligand>
</feature>
<feature type="binding site" evidence="19 44">
    <location>
        <position position="176"/>
    </location>
    <ligand>
        <name>GTP</name>
        <dbReference type="ChEBI" id="CHEBI:37565"/>
    </ligand>
</feature>
<feature type="modified residue" description="N-acetylserine" evidence="22 23">
    <location>
        <position position="2"/>
    </location>
</feature>
<feature type="modified residue" description="N6,N6-dimethyllysine; alternate" evidence="10 21 22 23">
    <location>
        <position position="57"/>
    </location>
</feature>
<feature type="modified residue" description="N6-methyllysine; alternate" evidence="10 21 22 23">
    <location>
        <position position="57"/>
    </location>
</feature>
<feature type="modified residue" description="N6-acetyllysine" evidence="8">
    <location>
        <position position="314"/>
    </location>
</feature>
<feature type="modified residue" description="Phosphothreonine" evidence="9 13 27">
    <location>
        <position position="383"/>
    </location>
</feature>
<feature type="mutagenesis site" description="No change in binding GDP and 3-fold reduction in binding EF-Ts." evidence="28">
    <original>H</original>
    <variation>A</variation>
    <location>
        <position position="20"/>
    </location>
</feature>
<feature type="mutagenesis site" description="Lowers GTPase activity 5 to 10-fold." evidence="16">
    <original>V</original>
    <variation>G</variation>
    <location>
        <position position="21"/>
    </location>
</feature>
<feature type="mutagenesis site" description="The mutant remains preferentially in the open inactive conformation." evidence="19">
    <original>T</original>
    <variation>E</variation>
    <location>
        <position position="62"/>
    </location>
</feature>
<feature type="mutagenesis site" description="Loss of GTPase activity and creation of an autophosphorylation site." evidence="11">
    <original>P</original>
    <variation>T</variation>
    <location>
        <position position="83"/>
    </location>
</feature>
<feature type="mutagenesis site" description="Weaker binding for GDP and for EF-Ts." evidence="28">
    <original>Q</original>
    <variation>A</variation>
    <location>
        <position position="115"/>
    </location>
</feature>
<feature type="mutagenesis site" description="Kirromycin resistant." evidence="15">
    <original>Q</original>
    <variation>K</variation>
    <location>
        <position position="125"/>
    </location>
</feature>
<feature type="mutagenesis site" description="Reduces affinity for GDP." evidence="14">
    <original>K</original>
    <variation>R</variation>
    <variation>Q</variation>
    <variation>E</variation>
    <variation>I</variation>
    <location>
        <position position="137"/>
    </location>
</feature>
<feature type="mutagenesis site" description="Reduces affinity for GDP; increases affinity for XDP." evidence="20">
    <original>D</original>
    <variation>N</variation>
    <location>
        <position position="139"/>
    </location>
</feature>
<feature type="mutagenesis site" description="Inhibits codon-induced conformational changes leading to GTPase activation on the ribosome." evidence="15">
    <original>G</original>
    <variation>D</variation>
    <location>
        <position position="223"/>
    </location>
</feature>
<feature type="mutagenesis site" description="Pulvomycin resistant." evidence="15">
    <original>R</original>
    <variation>C</variation>
    <location>
        <position position="231"/>
    </location>
</feature>
<feature type="mutagenesis site" description="Kirromycin resistant." evidence="15">
    <original>G</original>
    <variation>D</variation>
    <location>
        <position position="317"/>
    </location>
</feature>
<feature type="mutagenesis site" description="Pulvomycin resistant." evidence="15">
    <original>R</original>
    <variation>C</variation>
    <location>
        <position position="334"/>
    </location>
</feature>
<feature type="mutagenesis site" description="Pulvomycin resistant." evidence="15">
    <original>T</original>
    <variation>A</variation>
    <location>
        <position position="335"/>
    </location>
</feature>
<feature type="mutagenesis site" description="No change in binding GDP but higher binding constant for EF-Ts." evidence="28">
    <original>E</original>
    <variation>A</variation>
    <location>
        <position position="349"/>
    </location>
</feature>
<feature type="mutagenesis site" description="Kirromycin resistant." evidence="15">
    <original>A</original>
    <variation>T</variation>
    <variation>V</variation>
    <location>
        <position position="376"/>
    </location>
</feature>
<feature type="mutagenesis site" description="The mutant remains preferentially in the open inactive conformation." evidence="19">
    <original>T</original>
    <variation>E</variation>
    <location>
        <position position="383"/>
    </location>
</feature>
<feature type="mutagenesis site" description="No longer phosphorylated by phage protein doc, has no effect on translation." evidence="13">
    <original>T</original>
    <variation>V</variation>
    <location>
        <position position="383"/>
    </location>
</feature>
<feature type="helix" evidence="50">
    <location>
        <begin position="4"/>
        <end position="7"/>
    </location>
</feature>
<feature type="strand" evidence="48">
    <location>
        <begin position="12"/>
        <end position="19"/>
    </location>
</feature>
<feature type="strand" evidence="45">
    <location>
        <begin position="20"/>
        <end position="24"/>
    </location>
</feature>
<feature type="helix" evidence="48">
    <location>
        <begin position="25"/>
        <end position="40"/>
    </location>
</feature>
<feature type="helix" evidence="50">
    <location>
        <begin position="47"/>
        <end position="51"/>
    </location>
</feature>
<feature type="strand" evidence="50">
    <location>
        <begin position="55"/>
        <end position="60"/>
    </location>
</feature>
<feature type="strand" evidence="50">
    <location>
        <begin position="62"/>
        <end position="64"/>
    </location>
</feature>
<feature type="strand" evidence="48">
    <location>
        <begin position="68"/>
        <end position="71"/>
    </location>
</feature>
<feature type="strand" evidence="48">
    <location>
        <begin position="76"/>
        <end position="81"/>
    </location>
</feature>
<feature type="helix" evidence="48">
    <location>
        <begin position="85"/>
        <end position="94"/>
    </location>
</feature>
<feature type="strand" evidence="46">
    <location>
        <begin position="95"/>
        <end position="97"/>
    </location>
</feature>
<feature type="strand" evidence="48">
    <location>
        <begin position="100"/>
        <end position="107"/>
    </location>
</feature>
<feature type="turn" evidence="48">
    <location>
        <begin position="108"/>
        <end position="110"/>
    </location>
</feature>
<feature type="helix" evidence="48">
    <location>
        <begin position="116"/>
        <end position="125"/>
    </location>
</feature>
<feature type="strand" evidence="48">
    <location>
        <begin position="131"/>
        <end position="136"/>
    </location>
</feature>
<feature type="helix" evidence="48">
    <location>
        <begin position="138"/>
        <end position="140"/>
    </location>
</feature>
<feature type="helix" evidence="48">
    <location>
        <begin position="144"/>
        <end position="160"/>
    </location>
</feature>
<feature type="turn" evidence="48">
    <location>
        <begin position="165"/>
        <end position="167"/>
    </location>
</feature>
<feature type="strand" evidence="48">
    <location>
        <begin position="170"/>
        <end position="172"/>
    </location>
</feature>
<feature type="helix" evidence="48">
    <location>
        <begin position="175"/>
        <end position="179"/>
    </location>
</feature>
<feature type="helix" evidence="48">
    <location>
        <begin position="183"/>
        <end position="199"/>
    </location>
</feature>
<feature type="helix" evidence="48">
    <location>
        <begin position="206"/>
        <end position="208"/>
    </location>
</feature>
<feature type="strand" evidence="48">
    <location>
        <begin position="212"/>
        <end position="214"/>
    </location>
</feature>
<feature type="strand" evidence="48">
    <location>
        <begin position="217"/>
        <end position="221"/>
    </location>
</feature>
<feature type="turn" evidence="48">
    <location>
        <begin position="222"/>
        <end position="224"/>
    </location>
</feature>
<feature type="strand" evidence="48">
    <location>
        <begin position="225"/>
        <end position="231"/>
    </location>
</feature>
<feature type="strand" evidence="48">
    <location>
        <begin position="234"/>
        <end position="238"/>
    </location>
</feature>
<feature type="strand" evidence="48">
    <location>
        <begin position="242"/>
        <end position="249"/>
    </location>
</feature>
<feature type="strand" evidence="48">
    <location>
        <begin position="252"/>
        <end position="261"/>
    </location>
</feature>
<feature type="strand" evidence="48">
    <location>
        <begin position="264"/>
        <end position="270"/>
    </location>
</feature>
<feature type="strand" evidence="48">
    <location>
        <begin position="274"/>
        <end position="281"/>
    </location>
</feature>
<feature type="helix" evidence="48">
    <location>
        <begin position="284"/>
        <end position="286"/>
    </location>
</feature>
<feature type="strand" evidence="48">
    <location>
        <begin position="292"/>
        <end position="294"/>
    </location>
</feature>
<feature type="turn" evidence="49">
    <location>
        <begin position="296"/>
        <end position="298"/>
    </location>
</feature>
<feature type="strand" evidence="48">
    <location>
        <begin position="301"/>
        <end position="311"/>
    </location>
</feature>
<feature type="turn" evidence="48">
    <location>
        <begin position="314"/>
        <end position="317"/>
    </location>
</feature>
<feature type="strand" evidence="47">
    <location>
        <begin position="323"/>
        <end position="327"/>
    </location>
</feature>
<feature type="strand" evidence="48">
    <location>
        <begin position="330"/>
        <end position="333"/>
    </location>
</feature>
<feature type="strand" evidence="48">
    <location>
        <begin position="336"/>
        <end position="343"/>
    </location>
</feature>
<feature type="strand" evidence="48">
    <location>
        <begin position="356"/>
        <end position="368"/>
    </location>
</feature>
<feature type="strand" evidence="48">
    <location>
        <begin position="374"/>
        <end position="379"/>
    </location>
</feature>
<feature type="strand" evidence="48">
    <location>
        <begin position="382"/>
        <end position="394"/>
    </location>
</feature>
<proteinExistence type="evidence at protein level"/>
<comment type="function">
    <text evidence="11 16">GTP hydrolase that promotes the GTP-dependent binding of aminoacyl-tRNA to the A-site of ribosomes during protein biosynthesis.</text>
</comment>
<comment type="function">
    <text>May play an important regulatory role in cell growth and in the bacterial response to nutrient deprivation.</text>
</comment>
<comment type="function">
    <text evidence="6">Plays a stimulatory role in trans-translation; binds tmRNA.</text>
</comment>
<comment type="function">
    <text evidence="3">Protects glycyl-tRNA(Gly) from hydrolysis by E.coli D-aminoacyl-tRNA deacylase (dtd) (By similarity).</text>
</comment>
<comment type="function">
    <text evidence="26 31">(Microbial infection) Upon infection by bacteriophage Qbeta, part of the viral RNA-dependent RNA polymerase complex. With EF-Ts may provide a stabilizing scaffold for the beta (catalytic) subunit. Helps separate the double-stranded RNA of the template and growing RNA during elongation. With the beta subunit helps form the exit tunnel for template RNA.</text>
</comment>
<comment type="function">
    <text evidence="17 18">(Microbial infection) Required for the tRNase activity of CdiA-CT from E.coli strain EC869; the toxic CT module is thought to cleave tRNA in the context of translationally active GTP EF-Tu-aa-tRNA complexes. GTP is required for tRNase activity but is not hydrolyzed. CdiA-CT is the toxic component of a toxin-immunity protein module, which functions as a cellular contact-dependent growth inhibition (CDI) system. CDI modules allow bacteria to communicate with and inhibit the growth of closely related neighboring bacteria in a contact-dependent fashion (PubMed:28223500). EF-Tu interacts with at least 2 different toxic CT domains, the 2 toxins are different and degrade tRNA at different positions (PubMed:28223500, PubMed:28973472).</text>
</comment>
<comment type="function">
    <text evidence="17 18">(Microbial infection) Required for the tRNase activity of CdiA-CT from E.coli strain NC101; the toxic CT module is thought to cleave tRNA in the context of translationally active GTP EF-Tu-aa-tRNA complexes. The toxin may remodel the EF-Tu-aa-tRNA complex to displace the 3'-end of the aa-tRNA so it can enter the toxin active site and be cleaved. GTP is required for tRNase activity but is not hydrolyzed. CdiA-CT is the toxic component of a toxin-immunity protein module, which functions as a cellular contact-dependent growth inhibition (CDI) system. CDI modules allow bacteria to communicate with and inhibit the growth of closely related neighboring bacteria in a contact-dependent fashion (PubMed:28223500). EF-Tu interacts with at least 2 different toxic CT domains, the 2 toxins are different and degrade tRNA at different positions (PubMed:28223500, PubMed:28973472).</text>
</comment>
<comment type="catalytic activity">
    <reaction evidence="11 16">
        <text>GTP + H2O = GDP + phosphate + H(+)</text>
        <dbReference type="Rhea" id="RHEA:19669"/>
        <dbReference type="ChEBI" id="CHEBI:15377"/>
        <dbReference type="ChEBI" id="CHEBI:15378"/>
        <dbReference type="ChEBI" id="CHEBI:37565"/>
        <dbReference type="ChEBI" id="CHEBI:43474"/>
        <dbReference type="ChEBI" id="CHEBI:58189"/>
        <dbReference type="EC" id="3.6.5.3"/>
    </reaction>
    <physiologicalReaction direction="left-to-right" evidence="11 16">
        <dbReference type="Rhea" id="RHEA:19670"/>
    </physiologicalReaction>
</comment>
<comment type="activity regulation">
    <text evidence="19">Inhibited by phosphorylation at Thr-383.</text>
</comment>
<comment type="subunit">
    <text evidence="2 4 5 7 29 31">Monomer. Heterotetramer composed of two EF-Ts.EF-Tu dimer complexes (By similarity).</text>
</comment>
<comment type="subunit">
    <text evidence="26">(Microbial infection) Upon infection by bacteriophage Qbeta, part of the viral RNA-dependent RNA polymerase complex, the other subunits are the viral replicase catalytic subunit (AC P14647), host ribosomal protein S1 and EF-Ts (PubMed:816798).</text>
</comment>
<comment type="subunit">
    <text evidence="17">(Microbial infection) Forms a contact-dependent growth inhibition complex of EF-Tu, CdiA-CT-EC869 and CdiI-EC869 as well as a GTP, EF-Tu, CdiA-CT-EC869 complex.</text>
</comment>
<comment type="subunit">
    <text evidence="18">(Microbial infection) Forms a contact-dependent growth inhibition complex of CdiA-CT-NC101, CdiI-NC101 and EF-Tu; the complex is a dimer of heterotrimers.</text>
</comment>
<comment type="interaction">
    <interactant intactId="EBI-301077">
        <id>P0CE47</id>
    </interactant>
    <interactant intactId="EBI-562106">
        <id>P61517</id>
        <label>can</label>
    </interactant>
    <organismsDiffer>false</organismsDiffer>
    <experiments>2</experiments>
</comment>
<comment type="interaction">
    <interactant intactId="EBI-301077">
        <id>P0CE47</id>
    </interactant>
    <interactant intactId="EBI-560661">
        <id>P76251</id>
        <label>dmlA</label>
    </interactant>
    <organismsDiffer>false</organismsDiffer>
    <experiments>2</experiments>
</comment>
<comment type="interaction">
    <interactant intactId="EBI-301077">
        <id>P0CE47</id>
    </interactant>
    <interactant intactId="EBI-551473">
        <id>P15038</id>
        <label>helD</label>
    </interactant>
    <organismsDiffer>false</organismsDiffer>
    <experiments>3</experiments>
</comment>
<comment type="interaction">
    <interactant intactId="EBI-301077">
        <id>P0CE47</id>
    </interactant>
    <interactant intactId="EBI-562857">
        <id>P0A6Y5</id>
        <label>hslO</label>
    </interactant>
    <organismsDiffer>false</organismsDiffer>
    <experiments>3</experiments>
</comment>
<comment type="interaction">
    <interactant intactId="EBI-301077">
        <id>P0CE47</id>
    </interactant>
    <interactant intactId="EBI-552928">
        <id>P00956</id>
        <label>ileS</label>
    </interactant>
    <organismsDiffer>false</organismsDiffer>
    <experiments>2</experiments>
</comment>
<comment type="interaction">
    <interactant intactId="EBI-301077">
        <id>P0CE47</id>
    </interactant>
    <interactant intactId="EBI-544810">
        <id>P04951</id>
        <label>kdsB</label>
    </interactant>
    <organismsDiffer>false</organismsDiffer>
    <experiments>2</experiments>
</comment>
<comment type="interaction">
    <interactant intactId="EBI-301077">
        <id>P0CE47</id>
    </interactant>
    <interactant intactId="EBI-553692">
        <id>P10441</id>
        <label>lpxB</label>
    </interactant>
    <organismsDiffer>false</organismsDiffer>
    <experiments>3</experiments>
</comment>
<comment type="interaction">
    <interactant intactId="EBI-301077">
        <id>P0CE47</id>
    </interactant>
    <interactant intactId="EBI-554903">
        <id>P22634</id>
        <label>murI</label>
    </interactant>
    <organismsDiffer>false</organismsDiffer>
    <experiments>2</experiments>
</comment>
<comment type="interaction">
    <interactant intactId="EBI-301077">
        <id>P0CE47</id>
    </interactant>
    <interactant intactId="EBI-554920">
        <id>P23909</id>
        <label>mutS</label>
    </interactant>
    <organismsDiffer>false</organismsDiffer>
    <experiments>2</experiments>
</comment>
<comment type="interaction">
    <interactant intactId="EBI-301077">
        <id>P0CE47</id>
    </interactant>
    <interactant intactId="EBI-555182">
        <id>P33590</id>
        <label>nikA</label>
    </interactant>
    <organismsDiffer>false</organismsDiffer>
    <experiments>2</experiments>
</comment>
<comment type="interaction">
    <interactant intactId="EBI-301077">
        <id>P0CE47</id>
    </interactant>
    <interactant intactId="EBI-562488">
        <id>P0A6Z6</id>
        <label>nikR</label>
    </interactant>
    <organismsDiffer>false</organismsDiffer>
    <experiments>3</experiments>
</comment>
<comment type="interaction">
    <interactant intactId="EBI-301077">
        <id>P0CE47</id>
    </interactant>
    <interactant intactId="EBI-560024">
        <id>P77756</id>
        <label>queC</label>
    </interactant>
    <organismsDiffer>false</organismsDiffer>
    <experiments>3</experiments>
</comment>
<comment type="interaction">
    <interactant intactId="EBI-301077">
        <id>P0CE47</id>
    </interactant>
    <interactant intactId="EBI-545468">
        <id>P0AG30</id>
        <label>rho</label>
    </interactant>
    <organismsDiffer>false</organismsDiffer>
    <experiments>2</experiments>
</comment>
<comment type="interaction">
    <interactant intactId="EBI-301077">
        <id>P0CE47</id>
    </interactant>
    <interactant intactId="EBI-561207">
        <id>P0ADX9</id>
        <label>rsmD</label>
    </interactant>
    <organismsDiffer>false</organismsDiffer>
    <experiments>2</experiments>
</comment>
<comment type="interaction">
    <interactant intactId="EBI-301077">
        <id>P0CE47</id>
    </interactant>
    <interactant intactId="EBI-301164">
        <id>P0A6P1</id>
        <label>tsf</label>
    </interactant>
    <organismsDiffer>false</organismsDiffer>
    <experiments>12</experiments>
</comment>
<comment type="interaction">
    <interactant intactId="EBI-301077">
        <id>P0CE47</id>
    </interactant>
    <interactant intactId="EBI-370708">
        <id>P0A8J4</id>
        <label>ybeD</label>
    </interactant>
    <organismsDiffer>false</organismsDiffer>
    <experiments>3</experiments>
</comment>
<comment type="interaction">
    <interactant intactId="EBI-301077">
        <id>P0CE47</id>
    </interactant>
    <interactant intactId="EBI-561198">
        <id>P63389</id>
        <label>yheS</label>
    </interactant>
    <organismsDiffer>false</organismsDiffer>
    <experiments>3</experiments>
</comment>
<comment type="interaction">
    <interactant intactId="EBI-301077">
        <id>P0CE47</id>
    </interactant>
    <interactant intactId="EBI-561387">
        <id>P39408</id>
        <label>yjjV</label>
    </interactant>
    <organismsDiffer>false</organismsDiffer>
    <experiments>2</experiments>
</comment>
<comment type="interaction">
    <interactant intactId="EBI-301077">
        <id>P0CE47</id>
    </interactant>
    <interactant intactId="EBI-2908816">
        <id>Q06259</id>
        <label>doc</label>
    </interactant>
    <organismsDiffer>true</organismsDiffer>
    <experiments>5</experiments>
</comment>
<comment type="interaction">
    <interactant intactId="EBI-301077">
        <id>P0CE47</id>
    </interactant>
    <interactant intactId="EBI-9010000">
        <id>P14647</id>
    </interactant>
    <organismsDiffer>true</organismsDiffer>
    <experiments>2</experiments>
</comment>
<comment type="subcellular location">
    <subcellularLocation>
        <location>Cytoplasm</location>
    </subcellularLocation>
    <subcellularLocation>
        <location>Cell inner membrane</location>
        <topology>Peripheral membrane protein</topology>
    </subcellularLocation>
    <text>Between 50-80% of the protein is associated with the cell inner membrane. Localization to the membrane has been suggested to follow nutrient stress.</text>
</comment>
<comment type="PTM">
    <text>The N-terminus is blocked.</text>
</comment>
<comment type="PTM">
    <text evidence="10 21 22 23">Methylated in vivo on Lys-57 in response to nutrient starvation.</text>
</comment>
<comment type="PTM">
    <text evidence="9 13 19 27">Phosphorylated in vitro by phage toxin doc on Thr-383; phosphorylation stalls translation and arrests bacterial growth.</text>
</comment>
<comment type="PTM">
    <text evidence="9 12 13 27">Phosphorylated in vitro by HipA on Thr-383 (PubMed:19150849), this has since been reported not to occur in vivo (PubMed:24095282).</text>
</comment>
<comment type="miscellaneous">
    <text evidence="32">Present with about 70,000 molecules/cell.</text>
</comment>
<comment type="miscellaneous">
    <text evidence="26">This chain is also used in bacteriophage Q-beta RNA polymerase.</text>
</comment>
<comment type="miscellaneous">
    <text evidence="24">The antibiotic kirromycin inhibits protein biosynthesis by inhibiting the release of EF-Tu from the ribosome.</text>
</comment>
<comment type="miscellaneous">
    <text evidence="25">The antibiotic pulvomycin inhibits protein biosynthesis by disrupting the allosteric control mechanism of EF-Tu.</text>
</comment>
<comment type="similarity">
    <text evidence="4">Belongs to the TRAFAC class translation factor GTPase superfamily. Classic translation factor GTPase family. EF-Tu/EF-1A subfamily.</text>
</comment>
<comment type="caution">
    <text evidence="31">EF-Tu 1 and EF-Tu 2 differ in a single position and are no longer merged. However, many papers are found in both entries as it is not always possible to determine for each paper which of EF-Tu 1 or EF-Tu 2 was being worked upon.</text>
</comment>
<name>EFTU1_ECOLI</name>
<sequence length="394" mass="43284">MSKEKFERTKPHVNVGTIGHVDHGKTTLTAAITTVLAKTYGGAARAFDQIDNAPEEKARGITINTSHVEYDTPTRHYAHVDCPGHADYVKNMITGAAQMDGAILVVAATDGPMPQTREHILLGRQVGVPYIIVFLNKCDMVDDEELLELVEMEVRELLSQYDFPGDDTPIVRGSALKALEGDAEWEAKILELAGFLDSYIPEPERAIDKPFLLPIEDVFSISGRGTVVTGRVERGIIKVGEEVEIVGIKETQKSTCTGVEMFRKLLDEGRAGENVGVLLRGIKREEIERGQVLAKPGTIKPHTKFESEVYILSKDEGGRHTPFFKGYRPQFYFRTTDVTGTIELPEGVEMVMPGDNIKMVVTLIHPIAMDDGLRFAIREGGRTVGAGVVAKVLG</sequence>